<dbReference type="EMBL" id="AM270015">
    <property type="protein sequence ID" value="CAK44256.1"/>
    <property type="molecule type" value="Genomic_DNA"/>
</dbReference>
<dbReference type="RefSeq" id="XP_001399846.1">
    <property type="nucleotide sequence ID" value="XM_001399809.2"/>
</dbReference>
<dbReference type="SMR" id="A5AAA4"/>
<dbReference type="EnsemblFungi" id="CAK44256">
    <property type="protein sequence ID" value="CAK44256"/>
    <property type="gene ID" value="An02g07120"/>
</dbReference>
<dbReference type="GeneID" id="4979201"/>
<dbReference type="KEGG" id="ang:An02g07120"/>
<dbReference type="VEuPathDB" id="FungiDB:An02g07120"/>
<dbReference type="HOGENOM" id="CLU_031132_0_0_1"/>
<dbReference type="Proteomes" id="UP000006706">
    <property type="component" value="Chromosome 4R"/>
</dbReference>
<dbReference type="GO" id="GO:0016282">
    <property type="term" value="C:eukaryotic 43S preinitiation complex"/>
    <property type="evidence" value="ECO:0007669"/>
    <property type="project" value="UniProtKB-UniRule"/>
</dbReference>
<dbReference type="GO" id="GO:0033290">
    <property type="term" value="C:eukaryotic 48S preinitiation complex"/>
    <property type="evidence" value="ECO:0007669"/>
    <property type="project" value="UniProtKB-UniRule"/>
</dbReference>
<dbReference type="GO" id="GO:0071540">
    <property type="term" value="C:eukaryotic translation initiation factor 3 complex, eIF3e"/>
    <property type="evidence" value="ECO:0007669"/>
    <property type="project" value="UniProtKB-UniRule"/>
</dbReference>
<dbReference type="GO" id="GO:0003743">
    <property type="term" value="F:translation initiation factor activity"/>
    <property type="evidence" value="ECO:0007669"/>
    <property type="project" value="UniProtKB-UniRule"/>
</dbReference>
<dbReference type="GO" id="GO:0001732">
    <property type="term" value="P:formation of cytoplasmic translation initiation complex"/>
    <property type="evidence" value="ECO:0007669"/>
    <property type="project" value="UniProtKB-UniRule"/>
</dbReference>
<dbReference type="CDD" id="cd21378">
    <property type="entry name" value="eIF3E"/>
    <property type="match status" value="1"/>
</dbReference>
<dbReference type="Gene3D" id="1.25.40.570">
    <property type="match status" value="1"/>
</dbReference>
<dbReference type="HAMAP" id="MF_03004">
    <property type="entry name" value="eIF3e"/>
    <property type="match status" value="1"/>
</dbReference>
<dbReference type="InterPro" id="IPR016650">
    <property type="entry name" value="eIF3e"/>
</dbReference>
<dbReference type="InterPro" id="IPR019010">
    <property type="entry name" value="eIF3e_N"/>
</dbReference>
<dbReference type="InterPro" id="IPR000717">
    <property type="entry name" value="PCI_dom"/>
</dbReference>
<dbReference type="InterPro" id="IPR036390">
    <property type="entry name" value="WH_DNA-bd_sf"/>
</dbReference>
<dbReference type="PANTHER" id="PTHR10317">
    <property type="entry name" value="EUKARYOTIC TRANSLATION INITIATION FACTOR 3 SUBUNIT E"/>
    <property type="match status" value="1"/>
</dbReference>
<dbReference type="Pfam" id="PF09440">
    <property type="entry name" value="eIF3_N"/>
    <property type="match status" value="1"/>
</dbReference>
<dbReference type="Pfam" id="PF21357">
    <property type="entry name" value="EIF3E_C"/>
    <property type="match status" value="1"/>
</dbReference>
<dbReference type="Pfam" id="PF01399">
    <property type="entry name" value="PCI"/>
    <property type="match status" value="1"/>
</dbReference>
<dbReference type="PIRSF" id="PIRSF016255">
    <property type="entry name" value="eIF3e_su6"/>
    <property type="match status" value="1"/>
</dbReference>
<dbReference type="SMART" id="SM01186">
    <property type="entry name" value="eIF3_N"/>
    <property type="match status" value="1"/>
</dbReference>
<dbReference type="SMART" id="SM00088">
    <property type="entry name" value="PINT"/>
    <property type="match status" value="1"/>
</dbReference>
<dbReference type="SUPFAM" id="SSF46785">
    <property type="entry name" value="Winged helix' DNA-binding domain"/>
    <property type="match status" value="1"/>
</dbReference>
<dbReference type="PROSITE" id="PS50250">
    <property type="entry name" value="PCI"/>
    <property type="match status" value="1"/>
</dbReference>
<reference key="1">
    <citation type="journal article" date="2007" name="Nat. Biotechnol.">
        <title>Genome sequencing and analysis of the versatile cell factory Aspergillus niger CBS 513.88.</title>
        <authorList>
            <person name="Pel H.J."/>
            <person name="de Winde J.H."/>
            <person name="Archer D.B."/>
            <person name="Dyer P.S."/>
            <person name="Hofmann G."/>
            <person name="Schaap P.J."/>
            <person name="Turner G."/>
            <person name="de Vries R.P."/>
            <person name="Albang R."/>
            <person name="Albermann K."/>
            <person name="Andersen M.R."/>
            <person name="Bendtsen J.D."/>
            <person name="Benen J.A.E."/>
            <person name="van den Berg M."/>
            <person name="Breestraat S."/>
            <person name="Caddick M.X."/>
            <person name="Contreras R."/>
            <person name="Cornell M."/>
            <person name="Coutinho P.M."/>
            <person name="Danchin E.G.J."/>
            <person name="Debets A.J.M."/>
            <person name="Dekker P."/>
            <person name="van Dijck P.W.M."/>
            <person name="van Dijk A."/>
            <person name="Dijkhuizen L."/>
            <person name="Driessen A.J.M."/>
            <person name="d'Enfert C."/>
            <person name="Geysens S."/>
            <person name="Goosen C."/>
            <person name="Groot G.S.P."/>
            <person name="de Groot P.W.J."/>
            <person name="Guillemette T."/>
            <person name="Henrissat B."/>
            <person name="Herweijer M."/>
            <person name="van den Hombergh J.P.T.W."/>
            <person name="van den Hondel C.A.M.J.J."/>
            <person name="van der Heijden R.T.J.M."/>
            <person name="van der Kaaij R.M."/>
            <person name="Klis F.M."/>
            <person name="Kools H.J."/>
            <person name="Kubicek C.P."/>
            <person name="van Kuyk P.A."/>
            <person name="Lauber J."/>
            <person name="Lu X."/>
            <person name="van der Maarel M.J.E.C."/>
            <person name="Meulenberg R."/>
            <person name="Menke H."/>
            <person name="Mortimer M.A."/>
            <person name="Nielsen J."/>
            <person name="Oliver S.G."/>
            <person name="Olsthoorn M."/>
            <person name="Pal K."/>
            <person name="van Peij N.N.M.E."/>
            <person name="Ram A.F.J."/>
            <person name="Rinas U."/>
            <person name="Roubos J.A."/>
            <person name="Sagt C.M.J."/>
            <person name="Schmoll M."/>
            <person name="Sun J."/>
            <person name="Ussery D."/>
            <person name="Varga J."/>
            <person name="Vervecken W."/>
            <person name="van de Vondervoort P.J.J."/>
            <person name="Wedler H."/>
            <person name="Woesten H.A.B."/>
            <person name="Zeng A.-P."/>
            <person name="van Ooyen A.J.J."/>
            <person name="Visser J."/>
            <person name="Stam H."/>
        </authorList>
    </citation>
    <scope>NUCLEOTIDE SEQUENCE [LARGE SCALE GENOMIC DNA]</scope>
    <source>
        <strain>ATCC MYA-4892 / CBS 513.88 / FGSC A1513</strain>
    </source>
</reference>
<protein>
    <recommendedName>
        <fullName evidence="1">Eukaryotic translation initiation factor 3 subunit E</fullName>
        <shortName evidence="1">eIF3e</shortName>
    </recommendedName>
</protein>
<sequence>MAANVPPSAETLLSGAAAHPPKTAEEIANQYDLLPKLIPYLDRHLVFPLLEFSSGSQEDDKEMIRAKYELLKHTNMTDYVANLWKEINDSDTIPDEFVKKREEVLAKLQHYQEQSAKITELLQDEDVVGNLRSDKVANLKFLEEEHGVTADMVNSLFDYGRFQYSCGSYGNAAELLYQFRVLSTDNDKVASATWGKLASEILTTSWDGAMEEVQKVKDSIETRLFNNPLGQLQNRSWLIHWSLFPFFNYDPARDVLTDLFFSPAYINTIQTSCPWILRYLAAAVITNRNRAHKNSNVYQKQLKDLIRVVRQEGYEYSDPITDFVKALYVDFDFEEAQKKLGEAEDVLRSDFFLVSAADAFVEAARHLISESYCKIHQRIDIKDLSTRLGLNQDEGEKWIVNLIRDTRVDAKIDYKEGTVIMNHPPQSVYQQVIEKTKGAFFRTQVLSAAVAK</sequence>
<accession>A5AAA4</accession>
<proteinExistence type="inferred from homology"/>
<evidence type="ECO:0000255" key="1">
    <source>
        <dbReference type="HAMAP-Rule" id="MF_03004"/>
    </source>
</evidence>
<evidence type="ECO:0000255" key="2">
    <source>
        <dbReference type="PROSITE-ProRule" id="PRU01185"/>
    </source>
</evidence>
<comment type="function">
    <text evidence="1">Component of the eukaryotic translation initiation factor 3 (eIF-3) complex, which is involved in protein synthesis of a specialized repertoire of mRNAs and, together with other initiation factors, stimulates binding of mRNA and methionyl-tRNAi to the 40S ribosome. The eIF-3 complex specifically targets and initiates translation of a subset of mRNAs involved in cell proliferation.</text>
</comment>
<comment type="subunit">
    <text evidence="1">Component of the eukaryotic translation initiation factor 3 (eIF-3) complex.</text>
</comment>
<comment type="subcellular location">
    <subcellularLocation>
        <location evidence="1">Cytoplasm</location>
    </subcellularLocation>
</comment>
<comment type="similarity">
    <text evidence="1">Belongs to the eIF-3 subunit E family.</text>
</comment>
<keyword id="KW-0963">Cytoplasm</keyword>
<keyword id="KW-0396">Initiation factor</keyword>
<keyword id="KW-0648">Protein biosynthesis</keyword>
<keyword id="KW-1185">Reference proteome</keyword>
<organism>
    <name type="scientific">Aspergillus niger (strain ATCC MYA-4892 / CBS 513.88 / FGSC A1513)</name>
    <dbReference type="NCBI Taxonomy" id="425011"/>
    <lineage>
        <taxon>Eukaryota</taxon>
        <taxon>Fungi</taxon>
        <taxon>Dikarya</taxon>
        <taxon>Ascomycota</taxon>
        <taxon>Pezizomycotina</taxon>
        <taxon>Eurotiomycetes</taxon>
        <taxon>Eurotiomycetidae</taxon>
        <taxon>Eurotiales</taxon>
        <taxon>Aspergillaceae</taxon>
        <taxon>Aspergillus</taxon>
        <taxon>Aspergillus subgen. Circumdati</taxon>
    </lineage>
</organism>
<name>EIF3E_ASPNC</name>
<gene>
    <name type="primary">int6</name>
    <name type="ORF">An02g07120</name>
</gene>
<feature type="chain" id="PRO_0000365981" description="Eukaryotic translation initiation factor 3 subunit E">
    <location>
        <begin position="1"/>
        <end position="452"/>
    </location>
</feature>
<feature type="domain" description="PCI" evidence="2">
    <location>
        <begin position="257"/>
        <end position="426"/>
    </location>
</feature>